<evidence type="ECO:0000250" key="1"/>
<evidence type="ECO:0000255" key="2"/>
<evidence type="ECO:0000255" key="3">
    <source>
        <dbReference type="PROSITE-ProRule" id="PRU00543"/>
    </source>
</evidence>
<evidence type="ECO:0000255" key="4">
    <source>
        <dbReference type="PROSITE-ProRule" id="PRU00544"/>
    </source>
</evidence>
<evidence type="ECO:0000269" key="5">
    <source>
    </source>
</evidence>
<evidence type="ECO:0000269" key="6">
    <source>
    </source>
</evidence>
<gene>
    <name type="primary">trkA</name>
    <name type="ordered locus">b3290</name>
    <name type="ordered locus">JW3251</name>
</gene>
<name>TRKA_ECOLI</name>
<organism>
    <name type="scientific">Escherichia coli (strain K12)</name>
    <dbReference type="NCBI Taxonomy" id="83333"/>
    <lineage>
        <taxon>Bacteria</taxon>
        <taxon>Pseudomonadati</taxon>
        <taxon>Pseudomonadota</taxon>
        <taxon>Gammaproteobacteria</taxon>
        <taxon>Enterobacterales</taxon>
        <taxon>Enterobacteriaceae</taxon>
        <taxon>Escherichia</taxon>
    </lineage>
</organism>
<reference key="1">
    <citation type="journal article" date="1993" name="Mol. Microbiol.">
        <title>NAD+ binding to the Escherichia coli K(+)-uptake protein TrkA and sequence similarity between TrkA and domains of a family of dehydrogenases suggest a role for NAD+ in bacterial transport.</title>
        <authorList>
            <person name="Schloesser A."/>
            <person name="Hamann A."/>
            <person name="Bossemeyer D."/>
            <person name="Schneider E."/>
            <person name="Bakker E.P."/>
        </authorList>
    </citation>
    <scope>NUCLEOTIDE SEQUENCE [GENOMIC DNA]</scope>
    <scope>PROTEIN SEQUENCE OF 1-32</scope>
    <scope>FUNCTION</scope>
</reference>
<reference key="2">
    <citation type="journal article" date="1994" name="J. Bacteriol.">
        <title>Characterization of the Thermus thermophilus locus encoding peptide deformylase and methionyl-tRNA(fMet) formyltransferase.</title>
        <authorList>
            <person name="Meinnel T."/>
            <person name="Blanquet S."/>
        </authorList>
    </citation>
    <scope>NUCLEOTIDE SEQUENCE [GENOMIC DNA]</scope>
    <source>
        <strain>K12 / K37</strain>
    </source>
</reference>
<reference key="3">
    <citation type="journal article" date="1997" name="Science">
        <title>The complete genome sequence of Escherichia coli K-12.</title>
        <authorList>
            <person name="Blattner F.R."/>
            <person name="Plunkett G. III"/>
            <person name="Bloch C.A."/>
            <person name="Perna N.T."/>
            <person name="Burland V."/>
            <person name="Riley M."/>
            <person name="Collado-Vides J."/>
            <person name="Glasner J.D."/>
            <person name="Rode C.K."/>
            <person name="Mayhew G.F."/>
            <person name="Gregor J."/>
            <person name="Davis N.W."/>
            <person name="Kirkpatrick H.A."/>
            <person name="Goeden M.A."/>
            <person name="Rose D.J."/>
            <person name="Mau B."/>
            <person name="Shao Y."/>
        </authorList>
    </citation>
    <scope>NUCLEOTIDE SEQUENCE [LARGE SCALE GENOMIC DNA]</scope>
    <source>
        <strain>K12 / MG1655 / ATCC 47076</strain>
    </source>
</reference>
<reference key="4">
    <citation type="journal article" date="2006" name="Mol. Syst. Biol.">
        <title>Highly accurate genome sequences of Escherichia coli K-12 strains MG1655 and W3110.</title>
        <authorList>
            <person name="Hayashi K."/>
            <person name="Morooka N."/>
            <person name="Yamamoto Y."/>
            <person name="Fujita K."/>
            <person name="Isono K."/>
            <person name="Choi S."/>
            <person name="Ohtsubo E."/>
            <person name="Baba T."/>
            <person name="Wanner B.L."/>
            <person name="Mori H."/>
            <person name="Horiuchi T."/>
        </authorList>
    </citation>
    <scope>NUCLEOTIDE SEQUENCE [LARGE SCALE GENOMIC DNA]</scope>
    <source>
        <strain>K12 / W3110 / ATCC 27325 / DSM 5911</strain>
    </source>
</reference>
<reference key="5">
    <citation type="journal article" date="1997" name="J. Mol. Biol.">
        <title>A survey of polypeptide deformylase function throughout the eubacterial lineage.</title>
        <authorList>
            <person name="Mazel D."/>
            <person name="Coic E."/>
            <person name="Blanchard S."/>
            <person name="Saurin W."/>
            <person name="Marliere P."/>
        </authorList>
    </citation>
    <scope>NUCLEOTIDE SEQUENCE [GENOMIC DNA] OF 1-52</scope>
    <source>
        <strain>K12 / MG1655 / ATCC 47076</strain>
    </source>
</reference>
<reference key="6">
    <citation type="journal article" date="1989" name="J. Biol. Chem.">
        <title>K+-transport protein TrkA of Escherichia coli is a peripheral membrane protein that requires other trk gene products for attachment to the cytoplasmic membrane.</title>
        <authorList>
            <person name="Bossemeyer D."/>
            <person name="Borchard A."/>
            <person name="Dosch D.C."/>
            <person name="Helmer G.C."/>
            <person name="Epstein W."/>
            <person name="Booth I.R."/>
            <person name="Bakker E.P."/>
        </authorList>
    </citation>
    <scope>SUBCELLULAR LOCATION</scope>
    <scope>FUNCTION</scope>
</reference>
<protein>
    <recommendedName>
        <fullName>Trk system potassium uptake protein TrkA</fullName>
        <shortName>K(+)-uptake protein TrkA</shortName>
    </recommendedName>
</protein>
<proteinExistence type="evidence at protein level"/>
<accession>P0AGI8</accession>
<accession>P23868</accession>
<accession>P77041</accession>
<accession>Q2M6V4</accession>
<comment type="function">
    <text evidence="5 6">Part of the constitutive potassium transport systems TrkG and TrkH. May regulate the transport activity of TrkG and TrkH systems. Binds to NAD(+) and NADH.</text>
</comment>
<comment type="interaction">
    <interactant intactId="EBI-1132371">
        <id>P0AGI8</id>
    </interactant>
    <interactant intactId="EBI-547017">
        <id>P69829</id>
        <label>ptsN</label>
    </interactant>
    <organismsDiffer>false</organismsDiffer>
    <experiments>3</experiments>
</comment>
<comment type="subcellular location">
    <subcellularLocation>
        <location evidence="5">Cell inner membrane</location>
        <topology evidence="5">Peripheral membrane protein</topology>
        <orientation evidence="5">Cytoplasmic side</orientation>
    </subcellularLocation>
    <text>Peripherally bound to the inner side of the inner membrane via the TrkG and TrkH proteins.</text>
</comment>
<comment type="domain">
    <text evidence="1">The RCK N-terminal domain binds NAD and possibly other effectors. This is expected to cause a conformation change that regulates potassium transport (By similarity).</text>
</comment>
<keyword id="KW-0997">Cell inner membrane</keyword>
<keyword id="KW-1003">Cell membrane</keyword>
<keyword id="KW-0903">Direct protein sequencing</keyword>
<keyword id="KW-0406">Ion transport</keyword>
<keyword id="KW-0472">Membrane</keyword>
<keyword id="KW-0520">NAD</keyword>
<keyword id="KW-0630">Potassium</keyword>
<keyword id="KW-0633">Potassium transport</keyword>
<keyword id="KW-1185">Reference proteome</keyword>
<keyword id="KW-0677">Repeat</keyword>
<keyword id="KW-0813">Transport</keyword>
<feature type="chain" id="PRO_0000148712" description="Trk system potassium uptake protein TrkA">
    <location>
        <begin position="1"/>
        <end position="458"/>
    </location>
</feature>
<feature type="domain" description="RCK N-terminal 1" evidence="3">
    <location>
        <begin position="1"/>
        <end position="123"/>
    </location>
</feature>
<feature type="domain" description="RCK C-terminal 1" evidence="4">
    <location>
        <begin position="143"/>
        <end position="227"/>
    </location>
</feature>
<feature type="domain" description="RCK N-terminal 2" evidence="3">
    <location>
        <begin position="232"/>
        <end position="348"/>
    </location>
</feature>
<feature type="domain" description="RCK C-terminal 2" evidence="4">
    <location>
        <begin position="368"/>
        <end position="453"/>
    </location>
</feature>
<feature type="binding site" description="in other chain" evidence="1">
    <location>
        <begin position="7"/>
        <end position="11"/>
    </location>
    <ligand>
        <name>NAD(+)</name>
        <dbReference type="ChEBI" id="CHEBI:57540"/>
        <label>1</label>
        <note>ligand shared between dimeric partners</note>
    </ligand>
</feature>
<feature type="binding site" description="in other chain" evidence="1">
    <location>
        <position position="30"/>
    </location>
    <ligand>
        <name>NAD(+)</name>
        <dbReference type="ChEBI" id="CHEBI:57540"/>
        <label>1</label>
        <note>ligand shared between dimeric partners</note>
    </ligand>
</feature>
<feature type="binding site" description="in other chain" evidence="1">
    <location>
        <begin position="73"/>
        <end position="74"/>
    </location>
    <ligand>
        <name>NAD(+)</name>
        <dbReference type="ChEBI" id="CHEBI:57540"/>
        <label>1</label>
        <note>ligand shared between dimeric partners</note>
    </ligand>
</feature>
<feature type="binding site" evidence="1">
    <location>
        <position position="98"/>
    </location>
    <ligand>
        <name>NAD(+)</name>
        <dbReference type="ChEBI" id="CHEBI:57540"/>
        <label>1</label>
        <note>ligand shared between dimeric partners</note>
    </ligand>
</feature>
<feature type="binding site" evidence="2">
    <location>
        <begin position="234"/>
        <end position="262"/>
    </location>
    <ligand>
        <name>NAD(+)</name>
        <dbReference type="ChEBI" id="CHEBI:57540"/>
        <label>2</label>
    </ligand>
</feature>
<dbReference type="EMBL" id="X52114">
    <property type="protein sequence ID" value="CAA36359.1"/>
    <property type="molecule type" value="Genomic_DNA"/>
</dbReference>
<dbReference type="EMBL" id="X77091">
    <property type="protein sequence ID" value="CAA54371.1"/>
    <property type="molecule type" value="Genomic_DNA"/>
</dbReference>
<dbReference type="EMBL" id="U18997">
    <property type="protein sequence ID" value="AAA58087.1"/>
    <property type="molecule type" value="Genomic_DNA"/>
</dbReference>
<dbReference type="EMBL" id="U00096">
    <property type="protein sequence ID" value="AAC76315.1"/>
    <property type="molecule type" value="Genomic_DNA"/>
</dbReference>
<dbReference type="EMBL" id="AP009048">
    <property type="protein sequence ID" value="BAE78002.1"/>
    <property type="molecule type" value="Genomic_DNA"/>
</dbReference>
<dbReference type="EMBL" id="Y10307">
    <property type="protein sequence ID" value="CAA71360.1"/>
    <property type="molecule type" value="Genomic_DNA"/>
</dbReference>
<dbReference type="PIR" id="S36252">
    <property type="entry name" value="S36252"/>
</dbReference>
<dbReference type="RefSeq" id="NP_417748.1">
    <property type="nucleotide sequence ID" value="NC_000913.3"/>
</dbReference>
<dbReference type="RefSeq" id="WP_000691382.1">
    <property type="nucleotide sequence ID" value="NZ_STEB01000038.1"/>
</dbReference>
<dbReference type="SMR" id="P0AGI8"/>
<dbReference type="BioGRID" id="4263438">
    <property type="interactions" value="24"/>
</dbReference>
<dbReference type="BioGRID" id="852100">
    <property type="interactions" value="1"/>
</dbReference>
<dbReference type="DIP" id="DIP-35971N"/>
<dbReference type="FunCoup" id="P0AGI8">
    <property type="interactions" value="157"/>
</dbReference>
<dbReference type="IntAct" id="P0AGI8">
    <property type="interactions" value="5"/>
</dbReference>
<dbReference type="STRING" id="511145.b3290"/>
<dbReference type="TCDB" id="2.A.38.1.1">
    <property type="family name" value="the k(+) transporter (trk) family"/>
</dbReference>
<dbReference type="jPOST" id="P0AGI8"/>
<dbReference type="PaxDb" id="511145-b3290"/>
<dbReference type="EnsemblBacteria" id="AAC76315">
    <property type="protein sequence ID" value="AAC76315"/>
    <property type="gene ID" value="b3290"/>
</dbReference>
<dbReference type="GeneID" id="93778698"/>
<dbReference type="GeneID" id="947788"/>
<dbReference type="KEGG" id="ecj:JW3251"/>
<dbReference type="KEGG" id="eco:b3290"/>
<dbReference type="KEGG" id="ecoc:C3026_17885"/>
<dbReference type="PATRIC" id="fig|1411691.4.peg.3442"/>
<dbReference type="EchoBASE" id="EB1012"/>
<dbReference type="eggNOG" id="COG0569">
    <property type="taxonomic scope" value="Bacteria"/>
</dbReference>
<dbReference type="HOGENOM" id="CLU_046525_0_2_6"/>
<dbReference type="InParanoid" id="P0AGI8"/>
<dbReference type="OMA" id="IACQVAY"/>
<dbReference type="OrthoDB" id="9775180at2"/>
<dbReference type="PhylomeDB" id="P0AGI8"/>
<dbReference type="BioCyc" id="EcoCyc:TRKA-MONOMER"/>
<dbReference type="PRO" id="PR:P0AGI8"/>
<dbReference type="Proteomes" id="UP000000625">
    <property type="component" value="Chromosome"/>
</dbReference>
<dbReference type="GO" id="GO:0009898">
    <property type="term" value="C:cytoplasmic side of plasma membrane"/>
    <property type="evidence" value="ECO:0000314"/>
    <property type="project" value="EcoCyc"/>
</dbReference>
<dbReference type="GO" id="GO:0005829">
    <property type="term" value="C:cytosol"/>
    <property type="evidence" value="ECO:0000314"/>
    <property type="project" value="EcoCyc"/>
</dbReference>
<dbReference type="GO" id="GO:0051287">
    <property type="term" value="F:NAD binding"/>
    <property type="evidence" value="ECO:0000314"/>
    <property type="project" value="EcoCyc"/>
</dbReference>
<dbReference type="GO" id="GO:0015079">
    <property type="term" value="F:potassium ion transmembrane transporter activity"/>
    <property type="evidence" value="ECO:0007669"/>
    <property type="project" value="InterPro"/>
</dbReference>
<dbReference type="GO" id="GO:0071805">
    <property type="term" value="P:potassium ion transmembrane transport"/>
    <property type="evidence" value="ECO:0000315"/>
    <property type="project" value="EcoCyc"/>
</dbReference>
<dbReference type="GO" id="GO:0006813">
    <property type="term" value="P:potassium ion transport"/>
    <property type="evidence" value="ECO:0000318"/>
    <property type="project" value="GO_Central"/>
</dbReference>
<dbReference type="FunFam" id="3.30.70.1450:FF:000001">
    <property type="entry name" value="Trk system potassium transporter TrkA"/>
    <property type="match status" value="1"/>
</dbReference>
<dbReference type="FunFam" id="3.30.70.1450:FF:000002">
    <property type="entry name" value="Trk system potassium transporter TrkA"/>
    <property type="match status" value="1"/>
</dbReference>
<dbReference type="FunFam" id="3.40.50.720:FF:000027">
    <property type="entry name" value="Trk system potassium transporter TrkA"/>
    <property type="match status" value="1"/>
</dbReference>
<dbReference type="FunFam" id="3.40.50.720:FF:000042">
    <property type="entry name" value="Trk system potassium transporter TrkA"/>
    <property type="match status" value="1"/>
</dbReference>
<dbReference type="Gene3D" id="3.40.50.720">
    <property type="entry name" value="NAD(P)-binding Rossmann-like Domain"/>
    <property type="match status" value="2"/>
</dbReference>
<dbReference type="Gene3D" id="3.30.70.1450">
    <property type="entry name" value="Regulator of K+ conductance, C-terminal domain"/>
    <property type="match status" value="2"/>
</dbReference>
<dbReference type="InterPro" id="IPR006036">
    <property type="entry name" value="K_uptake_TrkA"/>
</dbReference>
<dbReference type="InterPro" id="IPR036291">
    <property type="entry name" value="NAD(P)-bd_dom_sf"/>
</dbReference>
<dbReference type="InterPro" id="IPR006037">
    <property type="entry name" value="RCK_C"/>
</dbReference>
<dbReference type="InterPro" id="IPR036721">
    <property type="entry name" value="RCK_C_sf"/>
</dbReference>
<dbReference type="InterPro" id="IPR003148">
    <property type="entry name" value="RCK_N"/>
</dbReference>
<dbReference type="InterPro" id="IPR050721">
    <property type="entry name" value="Trk_Ktr_HKT_K-transport"/>
</dbReference>
<dbReference type="NCBIfam" id="NF007030">
    <property type="entry name" value="PRK09496.1-1"/>
    <property type="match status" value="1"/>
</dbReference>
<dbReference type="NCBIfam" id="NF007031">
    <property type="entry name" value="PRK09496.1-2"/>
    <property type="match status" value="1"/>
</dbReference>
<dbReference type="NCBIfam" id="NF007032">
    <property type="entry name" value="PRK09496.1-4"/>
    <property type="match status" value="1"/>
</dbReference>
<dbReference type="NCBIfam" id="NF007039">
    <property type="entry name" value="PRK09496.3-2"/>
    <property type="match status" value="1"/>
</dbReference>
<dbReference type="PANTHER" id="PTHR43833">
    <property type="entry name" value="POTASSIUM CHANNEL PROTEIN 2-RELATED-RELATED"/>
    <property type="match status" value="1"/>
</dbReference>
<dbReference type="PANTHER" id="PTHR43833:SF5">
    <property type="entry name" value="TRK SYSTEM POTASSIUM UPTAKE PROTEIN TRKA"/>
    <property type="match status" value="1"/>
</dbReference>
<dbReference type="Pfam" id="PF02080">
    <property type="entry name" value="TrkA_C"/>
    <property type="match status" value="2"/>
</dbReference>
<dbReference type="Pfam" id="PF02254">
    <property type="entry name" value="TrkA_N"/>
    <property type="match status" value="2"/>
</dbReference>
<dbReference type="PRINTS" id="PR00335">
    <property type="entry name" value="KUPTAKETRKA"/>
</dbReference>
<dbReference type="SUPFAM" id="SSF51735">
    <property type="entry name" value="NAD(P)-binding Rossmann-fold domains"/>
    <property type="match status" value="2"/>
</dbReference>
<dbReference type="SUPFAM" id="SSF116726">
    <property type="entry name" value="TrkA C-terminal domain-like"/>
    <property type="match status" value="2"/>
</dbReference>
<dbReference type="PROSITE" id="PS51202">
    <property type="entry name" value="RCK_C"/>
    <property type="match status" value="2"/>
</dbReference>
<dbReference type="PROSITE" id="PS51201">
    <property type="entry name" value="RCK_N"/>
    <property type="match status" value="2"/>
</dbReference>
<sequence>MKIIILGAGQVGGTLAENLVGENNDITVVDTNGERLRTLQDKFDLRVVQGHGSHPRVLREAGADDADMLVAVTSSDETNMVACQVAYSLFNTPNRIARIRSPDYVRDADKLFHSDAVPIDHLIAPEQLVIDNIYRLIEYPGALQVVNFAEGKVSLAVVKAYYGGPLIGNALSTMREHMPHIDTRVAAIFRHDRPIRPQGSTIVEAGDEVFFIAASQHIRAVMSELQRLEKPYKRIMLVGGGNIGAGLARRLEKDYSVKLIERNQQRAAELAEKLQNTIVFFGDASDQELLAEEHIDQVDLFIAVTNDDEANIMSAMLAKRMGAKKVMVLIQRRAYVDLVQGSVIDIAISPQQATISALLSHVRKADIVGVSSLRRGVAEAIEAVAHGDESTSRVVGRVIDEIKLPPGTIIGAVVRGNDVMIANDNLRIEQGDHVIMFLTDKKFITDVERLFQPSPFFL</sequence>